<keyword id="KW-0030">Aminoacyl-tRNA synthetase</keyword>
<keyword id="KW-0067">ATP-binding</keyword>
<keyword id="KW-0963">Cytoplasm</keyword>
<keyword id="KW-0436">Ligase</keyword>
<keyword id="KW-0547">Nucleotide-binding</keyword>
<keyword id="KW-0648">Protein biosynthesis</keyword>
<keyword id="KW-1185">Reference proteome</keyword>
<protein>
    <recommendedName>
        <fullName>Probable leucine--tRNA ligase, cytoplasmic</fullName>
        <ecNumber>6.1.1.4</ecNumber>
    </recommendedName>
    <alternativeName>
        <fullName>Leucyl-tRNA synthetase</fullName>
        <shortName>LeuRS</shortName>
    </alternativeName>
</protein>
<accession>Q8SRS8</accession>
<organism>
    <name type="scientific">Encephalitozoon cuniculi (strain GB-M1)</name>
    <name type="common">Microsporidian parasite</name>
    <dbReference type="NCBI Taxonomy" id="284813"/>
    <lineage>
        <taxon>Eukaryota</taxon>
        <taxon>Fungi</taxon>
        <taxon>Fungi incertae sedis</taxon>
        <taxon>Microsporidia</taxon>
        <taxon>Unikaryonidae</taxon>
        <taxon>Encephalitozoon</taxon>
    </lineage>
</organism>
<evidence type="ECO:0000250" key="1"/>
<evidence type="ECO:0000305" key="2"/>
<proteinExistence type="inferred from homology"/>
<gene>
    <name type="ordered locus">ECU06_0280</name>
</gene>
<sequence>MEERSKLRYLSMLEVERDTISDVSEKRKFFVTFTYPYMNGRLHLGHLFSISKADFFSYYKELQGYNVLFPFSFHCTGMPISASAKKLAEELSGEKVDLSVKKIIEDLGFDDVKPFTDPVHWVRTFPGLCERSLKRFHGNIDWRRSFITTDINKYYDSFIKWQFNRLNELGHLSFGKRHSIFCPVDKQPCLDHDRRKGENVKPVGVVLCKLRFSEGILLARIKQGCVPSKAVVGSRCDFIGFEYCNEKYFAEKDVFENVDAQASGICVRESVKGDFFGGRRFSGFGKEVVCDAIEKDVPCVVKGTQDKKDPSLAEYIKNEIELISKVESTETQLAETKDLLKFYEPEEEVISRSGGKCIVALTDQWYINYCDPEWKKKVKRCIENLVCTDDTRAILEDGLEWIGKWGFSRSFGLGTRIPWDSEYLIDSLSDSTIYMAMYTFKHFLYRDLEGKDELFPSNRLSDDVWNYIFLNRSITEDLAPYEEILSNCRESFNYFYPIDLRVGGKDLLKNHLIFFLFNHVALFEEKHWPKRMFTNGHLMLNSEKMSKSSGNYMTVDESLDKFGVSSTRMCLAVCGDGNEDANFVESNANAFVLKLYSYVKMIEELCTGRSLNPCILDLMKGYGEMGFADRFLMQTISMNVAHATRAHEDMTYRDVVKYGFYEMVHAKEMYHILGGTNNEILFLLCKAMTQLLYPIIPSLARYLIETYFYSNFSLPVPFLSDTAEIDGVSYLKNTLKRLVAQKRRKKRCEVVEILVGVEYSEWKRKCMSIIDQIACECKVLNINVSEEMKTGESQFVPKIIDAVREVLKEFGIPEKKGILFSMDYLNHPENYSVKFNEYEVLKAHKYYIENNTGLEVIVCVSPRADPGTPLFEFK</sequence>
<name>SYLC_ENCCU</name>
<comment type="catalytic activity">
    <reaction>
        <text>tRNA(Leu) + L-leucine + ATP = L-leucyl-tRNA(Leu) + AMP + diphosphate</text>
        <dbReference type="Rhea" id="RHEA:11688"/>
        <dbReference type="Rhea" id="RHEA-COMP:9613"/>
        <dbReference type="Rhea" id="RHEA-COMP:9622"/>
        <dbReference type="ChEBI" id="CHEBI:30616"/>
        <dbReference type="ChEBI" id="CHEBI:33019"/>
        <dbReference type="ChEBI" id="CHEBI:57427"/>
        <dbReference type="ChEBI" id="CHEBI:78442"/>
        <dbReference type="ChEBI" id="CHEBI:78494"/>
        <dbReference type="ChEBI" id="CHEBI:456215"/>
        <dbReference type="EC" id="6.1.1.4"/>
    </reaction>
</comment>
<comment type="subcellular location">
    <subcellularLocation>
        <location evidence="1">Cytoplasm</location>
    </subcellularLocation>
</comment>
<comment type="similarity">
    <text evidence="2">Belongs to the class-I aminoacyl-tRNA synthetase family.</text>
</comment>
<dbReference type="EC" id="6.1.1.4"/>
<dbReference type="EMBL" id="AL590446">
    <property type="protein sequence ID" value="CAD25388.1"/>
    <property type="molecule type" value="Genomic_DNA"/>
</dbReference>
<dbReference type="RefSeq" id="NP_585784.1">
    <property type="nucleotide sequence ID" value="NM_001041406.1"/>
</dbReference>
<dbReference type="SMR" id="Q8SRS8"/>
<dbReference type="FunCoup" id="Q8SRS8">
    <property type="interactions" value="284"/>
</dbReference>
<dbReference type="STRING" id="284813.Q8SRS8"/>
<dbReference type="GeneID" id="859207"/>
<dbReference type="KEGG" id="ecu:ECU06_0280"/>
<dbReference type="VEuPathDB" id="MicrosporidiaDB:ECU06_0280"/>
<dbReference type="HOGENOM" id="CLU_004174_0_0_1"/>
<dbReference type="InParanoid" id="Q8SRS8"/>
<dbReference type="OMA" id="RMCLAVC"/>
<dbReference type="OrthoDB" id="10249672at2759"/>
<dbReference type="Proteomes" id="UP000000819">
    <property type="component" value="Chromosome VI"/>
</dbReference>
<dbReference type="GO" id="GO:0005737">
    <property type="term" value="C:cytoplasm"/>
    <property type="evidence" value="ECO:0007669"/>
    <property type="project" value="UniProtKB-SubCell"/>
</dbReference>
<dbReference type="GO" id="GO:0002161">
    <property type="term" value="F:aminoacyl-tRNA deacylase activity"/>
    <property type="evidence" value="ECO:0007669"/>
    <property type="project" value="InterPro"/>
</dbReference>
<dbReference type="GO" id="GO:0005524">
    <property type="term" value="F:ATP binding"/>
    <property type="evidence" value="ECO:0007669"/>
    <property type="project" value="UniProtKB-KW"/>
</dbReference>
<dbReference type="GO" id="GO:0004823">
    <property type="term" value="F:leucine-tRNA ligase activity"/>
    <property type="evidence" value="ECO:0007669"/>
    <property type="project" value="UniProtKB-EC"/>
</dbReference>
<dbReference type="GO" id="GO:0006429">
    <property type="term" value="P:leucyl-tRNA aminoacylation"/>
    <property type="evidence" value="ECO:0007669"/>
    <property type="project" value="InterPro"/>
</dbReference>
<dbReference type="CDD" id="cd00812">
    <property type="entry name" value="LeuRS_core"/>
    <property type="match status" value="1"/>
</dbReference>
<dbReference type="Gene3D" id="3.40.50.620">
    <property type="entry name" value="HUPs"/>
    <property type="match status" value="2"/>
</dbReference>
<dbReference type="Gene3D" id="3.90.740.10">
    <property type="entry name" value="Valyl/Leucyl/Isoleucyl-tRNA synthetase, editing domain"/>
    <property type="match status" value="2"/>
</dbReference>
<dbReference type="InterPro" id="IPR001412">
    <property type="entry name" value="aa-tRNA-synth_I_CS"/>
</dbReference>
<dbReference type="InterPro" id="IPR002300">
    <property type="entry name" value="aa-tRNA-synth_Ia"/>
</dbReference>
<dbReference type="InterPro" id="IPR004493">
    <property type="entry name" value="Leu-tRNA-synth_Ia_arc/euk"/>
</dbReference>
<dbReference type="InterPro" id="IPR014729">
    <property type="entry name" value="Rossmann-like_a/b/a_fold"/>
</dbReference>
<dbReference type="InterPro" id="IPR009080">
    <property type="entry name" value="tRNAsynth_Ia_anticodon-bd"/>
</dbReference>
<dbReference type="InterPro" id="IPR009008">
    <property type="entry name" value="Val/Leu/Ile-tRNA-synth_edit"/>
</dbReference>
<dbReference type="PANTHER" id="PTHR45794:SF1">
    <property type="entry name" value="LEUCINE--TRNA LIGASE, CYTOPLASMIC"/>
    <property type="match status" value="1"/>
</dbReference>
<dbReference type="PANTHER" id="PTHR45794">
    <property type="entry name" value="LEUCYL-TRNA SYNTHETASE"/>
    <property type="match status" value="1"/>
</dbReference>
<dbReference type="Pfam" id="PF00133">
    <property type="entry name" value="tRNA-synt_1"/>
    <property type="match status" value="1"/>
</dbReference>
<dbReference type="SUPFAM" id="SSF47323">
    <property type="entry name" value="Anticodon-binding domain of a subclass of class I aminoacyl-tRNA synthetases"/>
    <property type="match status" value="1"/>
</dbReference>
<dbReference type="SUPFAM" id="SSF52374">
    <property type="entry name" value="Nucleotidylyl transferase"/>
    <property type="match status" value="1"/>
</dbReference>
<dbReference type="PROSITE" id="PS00178">
    <property type="entry name" value="AA_TRNA_LIGASE_I"/>
    <property type="match status" value="1"/>
</dbReference>
<feature type="chain" id="PRO_0000388413" description="Probable leucine--tRNA ligase, cytoplasmic">
    <location>
        <begin position="1"/>
        <end position="874"/>
    </location>
</feature>
<feature type="short sequence motif" description="'HIGH' region" evidence="1">
    <location>
        <begin position="36"/>
        <end position="46"/>
    </location>
</feature>
<feature type="short sequence motif" description="'KMSKS' region" evidence="1">
    <location>
        <begin position="544"/>
        <end position="548"/>
    </location>
</feature>
<feature type="binding site" evidence="1">
    <location>
        <position position="547"/>
    </location>
    <ligand>
        <name>ATP</name>
        <dbReference type="ChEBI" id="CHEBI:30616"/>
    </ligand>
</feature>
<reference key="1">
    <citation type="journal article" date="2001" name="Nature">
        <title>Genome sequence and gene compaction of the eukaryote parasite Encephalitozoon cuniculi.</title>
        <authorList>
            <person name="Katinka M.D."/>
            <person name="Duprat S."/>
            <person name="Cornillot E."/>
            <person name="Metenier G."/>
            <person name="Thomarat F."/>
            <person name="Prensier G."/>
            <person name="Barbe V."/>
            <person name="Peyretaillade E."/>
            <person name="Brottier P."/>
            <person name="Wincker P."/>
            <person name="Delbac F."/>
            <person name="El Alaoui H."/>
            <person name="Peyret P."/>
            <person name="Saurin W."/>
            <person name="Gouy M."/>
            <person name="Weissenbach J."/>
            <person name="Vivares C.P."/>
        </authorList>
    </citation>
    <scope>NUCLEOTIDE SEQUENCE [LARGE SCALE GENOMIC DNA]</scope>
    <source>
        <strain>GB-M1</strain>
    </source>
</reference>